<dbReference type="EMBL" id="M80563">
    <property type="protein sequence ID" value="AAA51920.1"/>
    <property type="molecule type" value="mRNA"/>
</dbReference>
<dbReference type="EMBL" id="Z18950">
    <property type="protein sequence ID" value="CAA79474.1"/>
    <property type="molecule type" value="Genomic_DNA"/>
</dbReference>
<dbReference type="EMBL" id="Z33457">
    <property type="protein sequence ID" value="CAA83880.1"/>
    <property type="molecule type" value="Genomic_DNA"/>
</dbReference>
<dbReference type="EMBL" id="CR450345">
    <property type="protein sequence ID" value="CAG29341.1"/>
    <property type="molecule type" value="mRNA"/>
</dbReference>
<dbReference type="EMBL" id="AK292083">
    <property type="protein sequence ID" value="BAF84772.1"/>
    <property type="molecule type" value="mRNA"/>
</dbReference>
<dbReference type="EMBL" id="BX470102">
    <property type="status" value="NOT_ANNOTATED_CDS"/>
    <property type="molecule type" value="Genomic_DNA"/>
</dbReference>
<dbReference type="EMBL" id="CH471121">
    <property type="protein sequence ID" value="EAW53310.1"/>
    <property type="molecule type" value="Genomic_DNA"/>
</dbReference>
<dbReference type="EMBL" id="CH471121">
    <property type="protein sequence ID" value="EAW53311.1"/>
    <property type="molecule type" value="Genomic_DNA"/>
</dbReference>
<dbReference type="EMBL" id="CH471121">
    <property type="protein sequence ID" value="EAW53312.1"/>
    <property type="molecule type" value="Genomic_DNA"/>
</dbReference>
<dbReference type="EMBL" id="CH471121">
    <property type="protein sequence ID" value="EAW53313.1"/>
    <property type="molecule type" value="Genomic_DNA"/>
</dbReference>
<dbReference type="EMBL" id="CH471121">
    <property type="protein sequence ID" value="EAW53314.1"/>
    <property type="molecule type" value="Genomic_DNA"/>
</dbReference>
<dbReference type="EMBL" id="CH471121">
    <property type="protein sequence ID" value="EAW53315.1"/>
    <property type="molecule type" value="Genomic_DNA"/>
</dbReference>
<dbReference type="EMBL" id="BC000838">
    <property type="protein sequence ID" value="AAH00838.1"/>
    <property type="molecule type" value="mRNA"/>
</dbReference>
<dbReference type="EMBL" id="BC016300">
    <property type="protein sequence ID" value="AAH16300.1"/>
    <property type="molecule type" value="mRNA"/>
</dbReference>
<dbReference type="CCDS" id="CCDS1042.1"/>
<dbReference type="PIR" id="A48219">
    <property type="entry name" value="A48219"/>
</dbReference>
<dbReference type="RefSeq" id="NP_002952.1">
    <property type="nucleotide sequence ID" value="NM_002961.3"/>
</dbReference>
<dbReference type="RefSeq" id="NP_062427.1">
    <property type="nucleotide sequence ID" value="NM_019554.3"/>
</dbReference>
<dbReference type="PDB" id="1M31">
    <property type="method" value="NMR"/>
    <property type="chains" value="A/B=1-101"/>
</dbReference>
<dbReference type="PDB" id="2LNK">
    <property type="method" value="NMR"/>
    <property type="chains" value="A/B=1-101"/>
</dbReference>
<dbReference type="PDB" id="2MRD">
    <property type="method" value="NMR"/>
    <property type="chains" value="A/B=1-101"/>
</dbReference>
<dbReference type="PDB" id="2Q91">
    <property type="method" value="X-ray"/>
    <property type="resolution" value="1.63 A"/>
    <property type="chains" value="A/B=1-101"/>
</dbReference>
<dbReference type="PDB" id="3C1V">
    <property type="method" value="X-ray"/>
    <property type="resolution" value="1.50 A"/>
    <property type="chains" value="A/B/C/D=1-101"/>
</dbReference>
<dbReference type="PDB" id="3CGA">
    <property type="method" value="X-ray"/>
    <property type="resolution" value="2.03 A"/>
    <property type="chains" value="A/B=1-101"/>
</dbReference>
<dbReference type="PDB" id="3KO0">
    <property type="method" value="X-ray"/>
    <property type="resolution" value="2.30 A"/>
    <property type="chains" value="A/B/C/D/E/F/G/H/I/J/K/L/M/N/O/P/Q/R/S/T=1-101"/>
</dbReference>
<dbReference type="PDB" id="3M0W">
    <property type="method" value="X-ray"/>
    <property type="resolution" value="2.80 A"/>
    <property type="chains" value="A/B/C/D/E/F/G/H/I/J=2-101"/>
</dbReference>
<dbReference type="PDB" id="3ZWH">
    <property type="method" value="X-ray"/>
    <property type="resolution" value="1.94 A"/>
    <property type="chains" value="A/B=1-101"/>
</dbReference>
<dbReference type="PDB" id="4CFQ">
    <property type="method" value="X-ray"/>
    <property type="resolution" value="1.37 A"/>
    <property type="chains" value="A/B/C/D=1-88"/>
</dbReference>
<dbReference type="PDB" id="4CFR">
    <property type="method" value="X-ray"/>
    <property type="resolution" value="1.40 A"/>
    <property type="chains" value="A/B=1-101"/>
</dbReference>
<dbReference type="PDB" id="4ETO">
    <property type="method" value="X-ray"/>
    <property type="resolution" value="1.54 A"/>
    <property type="chains" value="A/B=1-93"/>
</dbReference>
<dbReference type="PDB" id="4HSZ">
    <property type="method" value="X-ray"/>
    <property type="resolution" value="2.25 A"/>
    <property type="chains" value="A/B/C/D=1-93"/>
</dbReference>
<dbReference type="PDB" id="5LPU">
    <property type="method" value="X-ray"/>
    <property type="resolution" value="2.10 A"/>
    <property type="chains" value="C/D=1-101"/>
</dbReference>
<dbReference type="PDB" id="6T58">
    <property type="method" value="X-ray"/>
    <property type="resolution" value="3.10 A"/>
    <property type="chains" value="A/B=1-93"/>
</dbReference>
<dbReference type="PDB" id="7PSP">
    <property type="method" value="X-ray"/>
    <property type="resolution" value="2.61 A"/>
    <property type="chains" value="A/B=1-100"/>
</dbReference>
<dbReference type="PDB" id="7PSQ">
    <property type="method" value="X-ray"/>
    <property type="resolution" value="1.91 A"/>
    <property type="chains" value="A/C/E/G=1-100"/>
</dbReference>
<dbReference type="PDBsum" id="1M31"/>
<dbReference type="PDBsum" id="2LNK"/>
<dbReference type="PDBsum" id="2MRD"/>
<dbReference type="PDBsum" id="2Q91"/>
<dbReference type="PDBsum" id="3C1V"/>
<dbReference type="PDBsum" id="3CGA"/>
<dbReference type="PDBsum" id="3KO0"/>
<dbReference type="PDBsum" id="3M0W"/>
<dbReference type="PDBsum" id="3ZWH"/>
<dbReference type="PDBsum" id="4CFQ"/>
<dbReference type="PDBsum" id="4CFR"/>
<dbReference type="PDBsum" id="4ETO"/>
<dbReference type="PDBsum" id="4HSZ"/>
<dbReference type="PDBsum" id="5LPU"/>
<dbReference type="PDBsum" id="6T58"/>
<dbReference type="PDBsum" id="7PSP"/>
<dbReference type="PDBsum" id="7PSQ"/>
<dbReference type="BMRB" id="P26447"/>
<dbReference type="SASBDB" id="P26447"/>
<dbReference type="SMR" id="P26447"/>
<dbReference type="BioGRID" id="112183">
    <property type="interactions" value="160"/>
</dbReference>
<dbReference type="DIP" id="DIP-44938N"/>
<dbReference type="FunCoup" id="P26447">
    <property type="interactions" value="543"/>
</dbReference>
<dbReference type="IntAct" id="P26447">
    <property type="interactions" value="118"/>
</dbReference>
<dbReference type="MINT" id="P26447"/>
<dbReference type="STRING" id="9606.ENSP00000357704"/>
<dbReference type="ChEMBL" id="CHEMBL2362976"/>
<dbReference type="DrugBank" id="DB09130">
    <property type="generic name" value="Copper"/>
</dbReference>
<dbReference type="DrugBank" id="DB00831">
    <property type="generic name" value="Trifluoperazine"/>
</dbReference>
<dbReference type="GlyGen" id="P26447">
    <property type="glycosylation" value="2 sites, 1 O-linked glycan (1 site)"/>
</dbReference>
<dbReference type="iPTMnet" id="P26447"/>
<dbReference type="MetOSite" id="P26447"/>
<dbReference type="PhosphoSitePlus" id="P26447"/>
<dbReference type="SwissPalm" id="P26447"/>
<dbReference type="BioMuta" id="S100A4"/>
<dbReference type="DMDM" id="115601"/>
<dbReference type="jPOST" id="P26447"/>
<dbReference type="MassIVE" id="P26447"/>
<dbReference type="PaxDb" id="9606-ENSP00000357705"/>
<dbReference type="PeptideAtlas" id="P26447"/>
<dbReference type="ProteomicsDB" id="54351"/>
<dbReference type="Pumba" id="P26447"/>
<dbReference type="TopDownProteomics" id="P26447"/>
<dbReference type="Antibodypedia" id="1551">
    <property type="antibodies" value="969 antibodies from 44 providers"/>
</dbReference>
<dbReference type="CPTC" id="P26447">
    <property type="antibodies" value="3 antibodies"/>
</dbReference>
<dbReference type="DNASU" id="6275"/>
<dbReference type="Ensembl" id="ENST00000354332.8">
    <property type="protein sequence ID" value="ENSP00000346294.4"/>
    <property type="gene ID" value="ENSG00000196154.12"/>
</dbReference>
<dbReference type="Ensembl" id="ENST00000368714.1">
    <property type="protein sequence ID" value="ENSP00000357703.1"/>
    <property type="gene ID" value="ENSG00000196154.12"/>
</dbReference>
<dbReference type="Ensembl" id="ENST00000368715.5">
    <property type="protein sequence ID" value="ENSP00000357704.1"/>
    <property type="gene ID" value="ENSG00000196154.12"/>
</dbReference>
<dbReference type="Ensembl" id="ENST00000368716.9">
    <property type="protein sequence ID" value="ENSP00000357705.4"/>
    <property type="gene ID" value="ENSG00000196154.12"/>
</dbReference>
<dbReference type="GeneID" id="6275"/>
<dbReference type="KEGG" id="hsa:6275"/>
<dbReference type="MANE-Select" id="ENST00000368716.9">
    <property type="protein sequence ID" value="ENSP00000357705.4"/>
    <property type="RefSeq nucleotide sequence ID" value="NM_002961.3"/>
    <property type="RefSeq protein sequence ID" value="NP_002952.1"/>
</dbReference>
<dbReference type="UCSC" id="uc001fby.4">
    <property type="organism name" value="human"/>
</dbReference>
<dbReference type="AGR" id="HGNC:10494"/>
<dbReference type="CTD" id="6275"/>
<dbReference type="DisGeNET" id="6275"/>
<dbReference type="GeneCards" id="S100A4"/>
<dbReference type="HGNC" id="HGNC:10494">
    <property type="gene designation" value="S100A4"/>
</dbReference>
<dbReference type="HPA" id="ENSG00000196154">
    <property type="expression patterns" value="Tissue enhanced (bone)"/>
</dbReference>
<dbReference type="MIM" id="114210">
    <property type="type" value="gene"/>
</dbReference>
<dbReference type="neXtProt" id="NX_P26447"/>
<dbReference type="OpenTargets" id="ENSG00000196154"/>
<dbReference type="PharmGKB" id="PA34906"/>
<dbReference type="VEuPathDB" id="HostDB:ENSG00000196154"/>
<dbReference type="eggNOG" id="ENOG502S4AU">
    <property type="taxonomic scope" value="Eukaryota"/>
</dbReference>
<dbReference type="GeneTree" id="ENSGT00940000161276"/>
<dbReference type="HOGENOM" id="CLU_138624_2_0_1"/>
<dbReference type="InParanoid" id="P26447"/>
<dbReference type="OMA" id="QDLPDKM"/>
<dbReference type="OrthoDB" id="8881129at2759"/>
<dbReference type="PAN-GO" id="P26447">
    <property type="GO annotations" value="6 GO annotations based on evolutionary models"/>
</dbReference>
<dbReference type="PhylomeDB" id="P26447"/>
<dbReference type="TreeFam" id="TF332727"/>
<dbReference type="PathwayCommons" id="P26447"/>
<dbReference type="SignaLink" id="P26447"/>
<dbReference type="SIGNOR" id="P26447"/>
<dbReference type="BioGRID-ORCS" id="6275">
    <property type="hits" value="12 hits in 1161 CRISPR screens"/>
</dbReference>
<dbReference type="CD-CODE" id="91857CE7">
    <property type="entry name" value="Nucleolus"/>
</dbReference>
<dbReference type="ChiTaRS" id="S100A4">
    <property type="organism name" value="human"/>
</dbReference>
<dbReference type="EvolutionaryTrace" id="P26447"/>
<dbReference type="GeneWiki" id="S100A4"/>
<dbReference type="GenomeRNAi" id="6275"/>
<dbReference type="Pharos" id="P26447">
    <property type="development level" value="Tchem"/>
</dbReference>
<dbReference type="PRO" id="PR:P26447"/>
<dbReference type="Proteomes" id="UP000005640">
    <property type="component" value="Chromosome 1"/>
</dbReference>
<dbReference type="RNAct" id="P26447">
    <property type="molecule type" value="protein"/>
</dbReference>
<dbReference type="Bgee" id="ENSG00000196154">
    <property type="expression patterns" value="Expressed in synovial joint and 198 other cell types or tissues"/>
</dbReference>
<dbReference type="GO" id="GO:0062023">
    <property type="term" value="C:collagen-containing extracellular matrix"/>
    <property type="evidence" value="ECO:0007005"/>
    <property type="project" value="BHF-UCL"/>
</dbReference>
<dbReference type="GO" id="GO:0005829">
    <property type="term" value="C:cytosol"/>
    <property type="evidence" value="ECO:0000314"/>
    <property type="project" value="HPA"/>
</dbReference>
<dbReference type="GO" id="GO:0070062">
    <property type="term" value="C:extracellular exosome"/>
    <property type="evidence" value="ECO:0007005"/>
    <property type="project" value="UniProtKB"/>
</dbReference>
<dbReference type="GO" id="GO:0005576">
    <property type="term" value="C:extracellular region"/>
    <property type="evidence" value="ECO:0007005"/>
    <property type="project" value="BHF-UCL"/>
</dbReference>
<dbReference type="GO" id="GO:0005615">
    <property type="term" value="C:extracellular space"/>
    <property type="evidence" value="ECO:0000314"/>
    <property type="project" value="UniProt"/>
</dbReference>
<dbReference type="GO" id="GO:0005654">
    <property type="term" value="C:nucleoplasm"/>
    <property type="evidence" value="ECO:0000314"/>
    <property type="project" value="HPA"/>
</dbReference>
<dbReference type="GO" id="GO:0005634">
    <property type="term" value="C:nucleus"/>
    <property type="evidence" value="ECO:0000314"/>
    <property type="project" value="UniProtKB"/>
</dbReference>
<dbReference type="GO" id="GO:0048471">
    <property type="term" value="C:perinuclear region of cytoplasm"/>
    <property type="evidence" value="ECO:0000314"/>
    <property type="project" value="UniProtKB"/>
</dbReference>
<dbReference type="GO" id="GO:0003779">
    <property type="term" value="F:actin binding"/>
    <property type="evidence" value="ECO:0007669"/>
    <property type="project" value="Ensembl"/>
</dbReference>
<dbReference type="GO" id="GO:0005509">
    <property type="term" value="F:calcium ion binding"/>
    <property type="evidence" value="ECO:0000318"/>
    <property type="project" value="GO_Central"/>
</dbReference>
<dbReference type="GO" id="GO:0048306">
    <property type="term" value="F:calcium-dependent protein binding"/>
    <property type="evidence" value="ECO:0000318"/>
    <property type="project" value="GO_Central"/>
</dbReference>
<dbReference type="GO" id="GO:0042056">
    <property type="term" value="F:chemoattractant activity"/>
    <property type="evidence" value="ECO:0000314"/>
    <property type="project" value="UniProt"/>
</dbReference>
<dbReference type="GO" id="GO:0042802">
    <property type="term" value="F:identical protein binding"/>
    <property type="evidence" value="ECO:0000353"/>
    <property type="project" value="IntAct"/>
</dbReference>
<dbReference type="GO" id="GO:0050786">
    <property type="term" value="F:RAGE receptor binding"/>
    <property type="evidence" value="ECO:0000353"/>
    <property type="project" value="UniProtKB"/>
</dbReference>
<dbReference type="GO" id="GO:0003723">
    <property type="term" value="F:RNA binding"/>
    <property type="evidence" value="ECO:0007005"/>
    <property type="project" value="UniProtKB"/>
</dbReference>
<dbReference type="GO" id="GO:0046914">
    <property type="term" value="F:transition metal ion binding"/>
    <property type="evidence" value="ECO:0007669"/>
    <property type="project" value="InterPro"/>
</dbReference>
<dbReference type="GO" id="GO:0001837">
    <property type="term" value="P:epithelial to mesenchymal transition"/>
    <property type="evidence" value="ECO:0000304"/>
    <property type="project" value="HGNC-UCL"/>
</dbReference>
<dbReference type="GO" id="GO:0043123">
    <property type="term" value="P:positive regulation of canonical NF-kappaB signal transduction"/>
    <property type="evidence" value="ECO:0000314"/>
    <property type="project" value="UniProtKB"/>
</dbReference>
<dbReference type="CDD" id="cd00213">
    <property type="entry name" value="S-100"/>
    <property type="match status" value="1"/>
</dbReference>
<dbReference type="FunFam" id="1.10.238.10:FF:000044">
    <property type="entry name" value="Protein S100"/>
    <property type="match status" value="1"/>
</dbReference>
<dbReference type="Gene3D" id="1.10.238.10">
    <property type="entry name" value="EF-hand"/>
    <property type="match status" value="1"/>
</dbReference>
<dbReference type="InterPro" id="IPR011992">
    <property type="entry name" value="EF-hand-dom_pair"/>
</dbReference>
<dbReference type="InterPro" id="IPR018247">
    <property type="entry name" value="EF_Hand_1_Ca_BS"/>
</dbReference>
<dbReference type="InterPro" id="IPR002048">
    <property type="entry name" value="EF_hand_dom"/>
</dbReference>
<dbReference type="InterPro" id="IPR034325">
    <property type="entry name" value="S-100_dom"/>
</dbReference>
<dbReference type="InterPro" id="IPR001751">
    <property type="entry name" value="S100/CaBP7/8-like_CS"/>
</dbReference>
<dbReference type="InterPro" id="IPR013787">
    <property type="entry name" value="S100_Ca-bd_sub"/>
</dbReference>
<dbReference type="PANTHER" id="PTHR11639:SF51">
    <property type="entry name" value="PROTEIN S100-A4"/>
    <property type="match status" value="1"/>
</dbReference>
<dbReference type="PANTHER" id="PTHR11639">
    <property type="entry name" value="S100 CALCIUM-BINDING PROTEIN"/>
    <property type="match status" value="1"/>
</dbReference>
<dbReference type="Pfam" id="PF01023">
    <property type="entry name" value="S_100"/>
    <property type="match status" value="1"/>
</dbReference>
<dbReference type="SMART" id="SM00054">
    <property type="entry name" value="EFh"/>
    <property type="match status" value="1"/>
</dbReference>
<dbReference type="SMART" id="SM01394">
    <property type="entry name" value="S_100"/>
    <property type="match status" value="1"/>
</dbReference>
<dbReference type="SUPFAM" id="SSF47473">
    <property type="entry name" value="EF-hand"/>
    <property type="match status" value="1"/>
</dbReference>
<dbReference type="PROSITE" id="PS00018">
    <property type="entry name" value="EF_HAND_1"/>
    <property type="match status" value="1"/>
</dbReference>
<dbReference type="PROSITE" id="PS50222">
    <property type="entry name" value="EF_HAND_2"/>
    <property type="match status" value="1"/>
</dbReference>
<dbReference type="PROSITE" id="PS00303">
    <property type="entry name" value="S100_CABP"/>
    <property type="match status" value="1"/>
</dbReference>
<gene>
    <name type="primary">S100A4</name>
    <name type="synonym">CAPL</name>
    <name type="synonym">MTS1</name>
</gene>
<reference key="1">
    <citation type="journal article" date="1992" name="Biochemistry">
        <title>S100 alpha, CAPL, and CACY: molecular cloning and expression analysis of three calcium-binding proteins from human heart.</title>
        <authorList>
            <person name="Engelkamp D."/>
            <person name="Schaefer B.W."/>
            <person name="Erne P."/>
            <person name="Heizmann C.W."/>
        </authorList>
    </citation>
    <scope>NUCLEOTIDE SEQUENCE [MRNA]</scope>
    <source>
        <tissue>Heart</tissue>
    </source>
</reference>
<reference key="2">
    <citation type="journal article" date="1993" name="Proc. Natl. Acad. Sci. U.S.A.">
        <title>Six S100 genes are clustered on human chromosome 1q21: identification of two genes coding for the two previously unreported calcium-binding proteins S100D and S100E.</title>
        <authorList>
            <person name="Engelkamp D."/>
            <person name="Schaefer B.W."/>
            <person name="Mattei M.-G."/>
            <person name="Erne P."/>
            <person name="Heizmann C.W."/>
        </authorList>
    </citation>
    <scope>NUCLEOTIDE SEQUENCE [GENOMIC DNA]</scope>
</reference>
<reference key="3">
    <citation type="journal article" date="1992" name="Proc. Natl. Acad. Sci. U.S.A.">
        <title>Transcriptional analysis of the mts1 gene with specific reference to 5' flanking sequences.</title>
        <authorList>
            <person name="Tulchinsky E.M."/>
            <person name="Ford H.L."/>
            <person name="Kramerov D."/>
            <person name="Reshetnyak E."/>
            <person name="Grigorian M."/>
            <person name="Zain S."/>
            <person name="Lukanidin E."/>
        </authorList>
    </citation>
    <scope>NUCLEOTIDE SEQUENCE [GENOMIC DNA]</scope>
    <source>
        <tissue>Spleen</tissue>
    </source>
</reference>
<reference key="4">
    <citation type="submission" date="2004-05" db="EMBL/GenBank/DDBJ databases">
        <title>Cloning of human full open reading frames in Gateway(TM) system entry vector (pDONR201).</title>
        <authorList>
            <person name="Ebert L."/>
            <person name="Schick M."/>
            <person name="Neubert P."/>
            <person name="Schatten R."/>
            <person name="Henze S."/>
            <person name="Korn B."/>
        </authorList>
    </citation>
    <scope>NUCLEOTIDE SEQUENCE [LARGE SCALE MRNA]</scope>
</reference>
<reference key="5">
    <citation type="journal article" date="2004" name="Nat. Genet.">
        <title>Complete sequencing and characterization of 21,243 full-length human cDNAs.</title>
        <authorList>
            <person name="Ota T."/>
            <person name="Suzuki Y."/>
            <person name="Nishikawa T."/>
            <person name="Otsuki T."/>
            <person name="Sugiyama T."/>
            <person name="Irie R."/>
            <person name="Wakamatsu A."/>
            <person name="Hayashi K."/>
            <person name="Sato H."/>
            <person name="Nagai K."/>
            <person name="Kimura K."/>
            <person name="Makita H."/>
            <person name="Sekine M."/>
            <person name="Obayashi M."/>
            <person name="Nishi T."/>
            <person name="Shibahara T."/>
            <person name="Tanaka T."/>
            <person name="Ishii S."/>
            <person name="Yamamoto J."/>
            <person name="Saito K."/>
            <person name="Kawai Y."/>
            <person name="Isono Y."/>
            <person name="Nakamura Y."/>
            <person name="Nagahari K."/>
            <person name="Murakami K."/>
            <person name="Yasuda T."/>
            <person name="Iwayanagi T."/>
            <person name="Wagatsuma M."/>
            <person name="Shiratori A."/>
            <person name="Sudo H."/>
            <person name="Hosoiri T."/>
            <person name="Kaku Y."/>
            <person name="Kodaira H."/>
            <person name="Kondo H."/>
            <person name="Sugawara M."/>
            <person name="Takahashi M."/>
            <person name="Kanda K."/>
            <person name="Yokoi T."/>
            <person name="Furuya T."/>
            <person name="Kikkawa E."/>
            <person name="Omura Y."/>
            <person name="Abe K."/>
            <person name="Kamihara K."/>
            <person name="Katsuta N."/>
            <person name="Sato K."/>
            <person name="Tanikawa M."/>
            <person name="Yamazaki M."/>
            <person name="Ninomiya K."/>
            <person name="Ishibashi T."/>
            <person name="Yamashita H."/>
            <person name="Murakawa K."/>
            <person name="Fujimori K."/>
            <person name="Tanai H."/>
            <person name="Kimata M."/>
            <person name="Watanabe M."/>
            <person name="Hiraoka S."/>
            <person name="Chiba Y."/>
            <person name="Ishida S."/>
            <person name="Ono Y."/>
            <person name="Takiguchi S."/>
            <person name="Watanabe S."/>
            <person name="Yosida M."/>
            <person name="Hotuta T."/>
            <person name="Kusano J."/>
            <person name="Kanehori K."/>
            <person name="Takahashi-Fujii A."/>
            <person name="Hara H."/>
            <person name="Tanase T.-O."/>
            <person name="Nomura Y."/>
            <person name="Togiya S."/>
            <person name="Komai F."/>
            <person name="Hara R."/>
            <person name="Takeuchi K."/>
            <person name="Arita M."/>
            <person name="Imose N."/>
            <person name="Musashino K."/>
            <person name="Yuuki H."/>
            <person name="Oshima A."/>
            <person name="Sasaki N."/>
            <person name="Aotsuka S."/>
            <person name="Yoshikawa Y."/>
            <person name="Matsunawa H."/>
            <person name="Ichihara T."/>
            <person name="Shiohata N."/>
            <person name="Sano S."/>
            <person name="Moriya S."/>
            <person name="Momiyama H."/>
            <person name="Satoh N."/>
            <person name="Takami S."/>
            <person name="Terashima Y."/>
            <person name="Suzuki O."/>
            <person name="Nakagawa S."/>
            <person name="Senoh A."/>
            <person name="Mizoguchi H."/>
            <person name="Goto Y."/>
            <person name="Shimizu F."/>
            <person name="Wakebe H."/>
            <person name="Hishigaki H."/>
            <person name="Watanabe T."/>
            <person name="Sugiyama A."/>
            <person name="Takemoto M."/>
            <person name="Kawakami B."/>
            <person name="Yamazaki M."/>
            <person name="Watanabe K."/>
            <person name="Kumagai A."/>
            <person name="Itakura S."/>
            <person name="Fukuzumi Y."/>
            <person name="Fujimori Y."/>
            <person name="Komiyama M."/>
            <person name="Tashiro H."/>
            <person name="Tanigami A."/>
            <person name="Fujiwara T."/>
            <person name="Ono T."/>
            <person name="Yamada K."/>
            <person name="Fujii Y."/>
            <person name="Ozaki K."/>
            <person name="Hirao M."/>
            <person name="Ohmori Y."/>
            <person name="Kawabata A."/>
            <person name="Hikiji T."/>
            <person name="Kobatake N."/>
            <person name="Inagaki H."/>
            <person name="Ikema Y."/>
            <person name="Okamoto S."/>
            <person name="Okitani R."/>
            <person name="Kawakami T."/>
            <person name="Noguchi S."/>
            <person name="Itoh T."/>
            <person name="Shigeta K."/>
            <person name="Senba T."/>
            <person name="Matsumura K."/>
            <person name="Nakajima Y."/>
            <person name="Mizuno T."/>
            <person name="Morinaga M."/>
            <person name="Sasaki M."/>
            <person name="Togashi T."/>
            <person name="Oyama M."/>
            <person name="Hata H."/>
            <person name="Watanabe M."/>
            <person name="Komatsu T."/>
            <person name="Mizushima-Sugano J."/>
            <person name="Satoh T."/>
            <person name="Shirai Y."/>
            <person name="Takahashi Y."/>
            <person name="Nakagawa K."/>
            <person name="Okumura K."/>
            <person name="Nagase T."/>
            <person name="Nomura N."/>
            <person name="Kikuchi H."/>
            <person name="Masuho Y."/>
            <person name="Yamashita R."/>
            <person name="Nakai K."/>
            <person name="Yada T."/>
            <person name="Nakamura Y."/>
            <person name="Ohara O."/>
            <person name="Isogai T."/>
            <person name="Sugano S."/>
        </authorList>
    </citation>
    <scope>NUCLEOTIDE SEQUENCE [LARGE SCALE MRNA]</scope>
    <source>
        <tissue>Synovium</tissue>
    </source>
</reference>
<reference key="6">
    <citation type="journal article" date="2006" name="Nature">
        <title>The DNA sequence and biological annotation of human chromosome 1.</title>
        <authorList>
            <person name="Gregory S.G."/>
            <person name="Barlow K.F."/>
            <person name="McLay K.E."/>
            <person name="Kaul R."/>
            <person name="Swarbreck D."/>
            <person name="Dunham A."/>
            <person name="Scott C.E."/>
            <person name="Howe K.L."/>
            <person name="Woodfine K."/>
            <person name="Spencer C.C.A."/>
            <person name="Jones M.C."/>
            <person name="Gillson C."/>
            <person name="Searle S."/>
            <person name="Zhou Y."/>
            <person name="Kokocinski F."/>
            <person name="McDonald L."/>
            <person name="Evans R."/>
            <person name="Phillips K."/>
            <person name="Atkinson A."/>
            <person name="Cooper R."/>
            <person name="Jones C."/>
            <person name="Hall R.E."/>
            <person name="Andrews T.D."/>
            <person name="Lloyd C."/>
            <person name="Ainscough R."/>
            <person name="Almeida J.P."/>
            <person name="Ambrose K.D."/>
            <person name="Anderson F."/>
            <person name="Andrew R.W."/>
            <person name="Ashwell R.I.S."/>
            <person name="Aubin K."/>
            <person name="Babbage A.K."/>
            <person name="Bagguley C.L."/>
            <person name="Bailey J."/>
            <person name="Beasley H."/>
            <person name="Bethel G."/>
            <person name="Bird C.P."/>
            <person name="Bray-Allen S."/>
            <person name="Brown J.Y."/>
            <person name="Brown A.J."/>
            <person name="Buckley D."/>
            <person name="Burton J."/>
            <person name="Bye J."/>
            <person name="Carder C."/>
            <person name="Chapman J.C."/>
            <person name="Clark S.Y."/>
            <person name="Clarke G."/>
            <person name="Clee C."/>
            <person name="Cobley V."/>
            <person name="Collier R.E."/>
            <person name="Corby N."/>
            <person name="Coville G.J."/>
            <person name="Davies J."/>
            <person name="Deadman R."/>
            <person name="Dunn M."/>
            <person name="Earthrowl M."/>
            <person name="Ellington A.G."/>
            <person name="Errington H."/>
            <person name="Frankish A."/>
            <person name="Frankland J."/>
            <person name="French L."/>
            <person name="Garner P."/>
            <person name="Garnett J."/>
            <person name="Gay L."/>
            <person name="Ghori M.R.J."/>
            <person name="Gibson R."/>
            <person name="Gilby L.M."/>
            <person name="Gillett W."/>
            <person name="Glithero R.J."/>
            <person name="Grafham D.V."/>
            <person name="Griffiths C."/>
            <person name="Griffiths-Jones S."/>
            <person name="Grocock R."/>
            <person name="Hammond S."/>
            <person name="Harrison E.S.I."/>
            <person name="Hart E."/>
            <person name="Haugen E."/>
            <person name="Heath P.D."/>
            <person name="Holmes S."/>
            <person name="Holt K."/>
            <person name="Howden P.J."/>
            <person name="Hunt A.R."/>
            <person name="Hunt S.E."/>
            <person name="Hunter G."/>
            <person name="Isherwood J."/>
            <person name="James R."/>
            <person name="Johnson C."/>
            <person name="Johnson D."/>
            <person name="Joy A."/>
            <person name="Kay M."/>
            <person name="Kershaw J.K."/>
            <person name="Kibukawa M."/>
            <person name="Kimberley A.M."/>
            <person name="King A."/>
            <person name="Knights A.J."/>
            <person name="Lad H."/>
            <person name="Laird G."/>
            <person name="Lawlor S."/>
            <person name="Leongamornlert D.A."/>
            <person name="Lloyd D.M."/>
            <person name="Loveland J."/>
            <person name="Lovell J."/>
            <person name="Lush M.J."/>
            <person name="Lyne R."/>
            <person name="Martin S."/>
            <person name="Mashreghi-Mohammadi M."/>
            <person name="Matthews L."/>
            <person name="Matthews N.S.W."/>
            <person name="McLaren S."/>
            <person name="Milne S."/>
            <person name="Mistry S."/>
            <person name="Moore M.J.F."/>
            <person name="Nickerson T."/>
            <person name="O'Dell C.N."/>
            <person name="Oliver K."/>
            <person name="Palmeiri A."/>
            <person name="Palmer S.A."/>
            <person name="Parker A."/>
            <person name="Patel D."/>
            <person name="Pearce A.V."/>
            <person name="Peck A.I."/>
            <person name="Pelan S."/>
            <person name="Phelps K."/>
            <person name="Phillimore B.J."/>
            <person name="Plumb R."/>
            <person name="Rajan J."/>
            <person name="Raymond C."/>
            <person name="Rouse G."/>
            <person name="Saenphimmachak C."/>
            <person name="Sehra H.K."/>
            <person name="Sheridan E."/>
            <person name="Shownkeen R."/>
            <person name="Sims S."/>
            <person name="Skuce C.D."/>
            <person name="Smith M."/>
            <person name="Steward C."/>
            <person name="Subramanian S."/>
            <person name="Sycamore N."/>
            <person name="Tracey A."/>
            <person name="Tromans A."/>
            <person name="Van Helmond Z."/>
            <person name="Wall M."/>
            <person name="Wallis J.M."/>
            <person name="White S."/>
            <person name="Whitehead S.L."/>
            <person name="Wilkinson J.E."/>
            <person name="Willey D.L."/>
            <person name="Williams H."/>
            <person name="Wilming L."/>
            <person name="Wray P.W."/>
            <person name="Wu Z."/>
            <person name="Coulson A."/>
            <person name="Vaudin M."/>
            <person name="Sulston J.E."/>
            <person name="Durbin R.M."/>
            <person name="Hubbard T."/>
            <person name="Wooster R."/>
            <person name="Dunham I."/>
            <person name="Carter N.P."/>
            <person name="McVean G."/>
            <person name="Ross M.T."/>
            <person name="Harrow J."/>
            <person name="Olson M.V."/>
            <person name="Beck S."/>
            <person name="Rogers J."/>
            <person name="Bentley D.R."/>
        </authorList>
    </citation>
    <scope>NUCLEOTIDE SEQUENCE [LARGE SCALE GENOMIC DNA]</scope>
</reference>
<reference key="7">
    <citation type="submission" date="2005-09" db="EMBL/GenBank/DDBJ databases">
        <authorList>
            <person name="Mural R.J."/>
            <person name="Istrail S."/>
            <person name="Sutton G.G."/>
            <person name="Florea L."/>
            <person name="Halpern A.L."/>
            <person name="Mobarry C.M."/>
            <person name="Lippert R."/>
            <person name="Walenz B."/>
            <person name="Shatkay H."/>
            <person name="Dew I."/>
            <person name="Miller J.R."/>
            <person name="Flanigan M.J."/>
            <person name="Edwards N.J."/>
            <person name="Bolanos R."/>
            <person name="Fasulo D."/>
            <person name="Halldorsson B.V."/>
            <person name="Hannenhalli S."/>
            <person name="Turner R."/>
            <person name="Yooseph S."/>
            <person name="Lu F."/>
            <person name="Nusskern D.R."/>
            <person name="Shue B.C."/>
            <person name="Zheng X.H."/>
            <person name="Zhong F."/>
            <person name="Delcher A.L."/>
            <person name="Huson D.H."/>
            <person name="Kravitz S.A."/>
            <person name="Mouchard L."/>
            <person name="Reinert K."/>
            <person name="Remington K.A."/>
            <person name="Clark A.G."/>
            <person name="Waterman M.S."/>
            <person name="Eichler E.E."/>
            <person name="Adams M.D."/>
            <person name="Hunkapiller M.W."/>
            <person name="Myers E.W."/>
            <person name="Venter J.C."/>
        </authorList>
    </citation>
    <scope>NUCLEOTIDE SEQUENCE [LARGE SCALE GENOMIC DNA]</scope>
</reference>
<reference key="8">
    <citation type="journal article" date="2004" name="Genome Res.">
        <title>The status, quality, and expansion of the NIH full-length cDNA project: the Mammalian Gene Collection (MGC).</title>
        <authorList>
            <consortium name="The MGC Project Team"/>
        </authorList>
    </citation>
    <scope>NUCLEOTIDE SEQUENCE [LARGE SCALE MRNA]</scope>
    <source>
        <tissue>Cervix</tissue>
        <tissue>Prostate</tissue>
    </source>
</reference>
<reference key="9">
    <citation type="journal article" date="1992" name="Biochem. Biophys. Res. Commun.">
        <title>Calcyclin and calvasculin exist in human platelets.</title>
        <authorList>
            <person name="Tomida Y."/>
            <person name="Terasawa M."/>
            <person name="Kobayashi R."/>
            <person name="Hidaka H."/>
        </authorList>
    </citation>
    <scope>PROTEIN SEQUENCE OF 8-18 AND 36-57</scope>
    <source>
        <tissue>Platelet</tissue>
    </source>
</reference>
<reference key="10">
    <citation type="journal article" date="2002" name="J. Biol. Chem.">
        <title>Liprin beta 1, a member of the family of LAR transmembrane tyrosine phosphatase-interacting proteins, is a new target for the metastasis-associated protein S100A4 (Mts1).</title>
        <authorList>
            <person name="Kriajevska M."/>
            <person name="Fischer-Larsen M."/>
            <person name="Moertz E."/>
            <person name="Vorm O."/>
            <person name="Tulchinsky E."/>
            <person name="Grigorian M."/>
            <person name="Ambartsumian N."/>
            <person name="Lukanidin E."/>
        </authorList>
    </citation>
    <scope>INTERACTION WITH PPFIBP1</scope>
</reference>
<reference key="11">
    <citation type="journal article" date="2003" name="Nature">
        <title>Proteomic characterization of the human centrosome by protein correlation profiling.</title>
        <authorList>
            <person name="Andersen J.S."/>
            <person name="Wilkinson C.J."/>
            <person name="Mayor T."/>
            <person name="Mortensen P."/>
            <person name="Nigg E.A."/>
            <person name="Mann M."/>
        </authorList>
    </citation>
    <scope>IDENTIFICATION BY MASS SPECTROMETRY</scope>
    <source>
        <tissue>Lymphoblast</tissue>
    </source>
</reference>
<reference key="12">
    <citation type="journal article" date="2006" name="Cancer Res.">
        <title>The S100A4 metastasis factor regulates cellular motility via a direct interaction with myosin-IIA.</title>
        <authorList>
            <person name="Li Z.H."/>
            <person name="Bresnick A.R."/>
        </authorList>
    </citation>
    <scope>FUNCTION</scope>
    <scope>INTERACTION WITH MYH9</scope>
</reference>
<reference key="13">
    <citation type="journal article" date="2009" name="Science">
        <title>Lysine acetylation targets protein complexes and co-regulates major cellular functions.</title>
        <authorList>
            <person name="Choudhary C."/>
            <person name="Kumar C."/>
            <person name="Gnad F."/>
            <person name="Nielsen M.L."/>
            <person name="Rehman M."/>
            <person name="Walther T.C."/>
            <person name="Olsen J.V."/>
            <person name="Mann M."/>
        </authorList>
    </citation>
    <scope>ACETYLATION [LARGE SCALE ANALYSIS] AT LYS-7 AND LYS-35</scope>
    <scope>IDENTIFICATION BY MASS SPECTROMETRY [LARGE SCALE ANALYSIS]</scope>
</reference>
<reference key="14">
    <citation type="journal article" date="2011" name="BMC Syst. Biol.">
        <title>Initial characterization of the human central proteome.</title>
        <authorList>
            <person name="Burkard T.R."/>
            <person name="Planyavsky M."/>
            <person name="Kaupe I."/>
            <person name="Breitwieser F.P."/>
            <person name="Buerckstuemmer T."/>
            <person name="Bennett K.L."/>
            <person name="Superti-Furga G."/>
            <person name="Colinge J."/>
        </authorList>
    </citation>
    <scope>IDENTIFICATION BY MASS SPECTROMETRY [LARGE SCALE ANALYSIS]</scope>
</reference>
<reference key="15">
    <citation type="journal article" date="2012" name="J. Immunol.">
        <title>The unique cytoplasmic domain of human FcgammaRIIIA regulates receptor-mediated function.</title>
        <authorList>
            <person name="Li X."/>
            <person name="Baskin J.G."/>
            <person name="Mangan E.K."/>
            <person name="Su K."/>
            <person name="Gibson A.W."/>
            <person name="Ji C."/>
            <person name="Edberg J.C."/>
            <person name="Kimberly R.P."/>
        </authorList>
    </citation>
    <scope>INTERACTION WITH FCGR3A</scope>
</reference>
<reference key="16">
    <citation type="journal article" date="2013" name="Oncogene">
        <title>S100A4 interacts with p53 in the nucleus and promotes p53 degradation.</title>
        <authorList>
            <person name="Orre L.M."/>
            <person name="Panizza E."/>
            <person name="Kaminskyy V.O."/>
            <person name="Vernet E."/>
            <person name="Graeslund T."/>
            <person name="Zhivotovsky B."/>
            <person name="Lehtioe J."/>
        </authorList>
    </citation>
    <scope>FUNCTION</scope>
    <scope>INTERACTION WITH TP53</scope>
    <scope>SUBCELLULAR LOCATION</scope>
</reference>
<reference key="17">
    <citation type="journal article" date="2014" name="J. Proteomics">
        <title>An enzyme assisted RP-RPLC approach for in-depth analysis of human liver phosphoproteome.</title>
        <authorList>
            <person name="Bian Y."/>
            <person name="Song C."/>
            <person name="Cheng K."/>
            <person name="Dong M."/>
            <person name="Wang F."/>
            <person name="Huang J."/>
            <person name="Sun D."/>
            <person name="Wang L."/>
            <person name="Ye M."/>
            <person name="Zou H."/>
        </authorList>
    </citation>
    <scope>IDENTIFICATION BY MASS SPECTROMETRY [LARGE SCALE ANALYSIS]</scope>
    <source>
        <tissue>Liver</tissue>
    </source>
</reference>
<reference key="18">
    <citation type="journal article" date="2015" name="Cell Cycle">
        <title>A new role for PGRP-S (Tag7) in immune defense: lymphocyte migration is induced by a chemoattractant complex of Tag7 with Mts1.</title>
        <authorList>
            <person name="Dukhanina E.A."/>
            <person name="Lukyanova T.I."/>
            <person name="Romanova E.A."/>
            <person name="Guerriero V."/>
            <person name="Gnuchev N.V."/>
            <person name="Georgiev G.P."/>
            <person name="Yashin D.V."/>
            <person name="Sashchenko L.P."/>
        </authorList>
    </citation>
    <scope>FUNCTION</scope>
    <scope>SUBCELLULAR LOCATION</scope>
    <scope>INTERACTION WITH PGLYRP1</scope>
</reference>
<reference key="19">
    <citation type="journal article" date="2015" name="Proteomics">
        <title>N-terminome analysis of the human mitochondrial proteome.</title>
        <authorList>
            <person name="Vaca Jacome A.S."/>
            <person name="Rabilloud T."/>
            <person name="Schaeffer-Reiss C."/>
            <person name="Rompais M."/>
            <person name="Ayoub D."/>
            <person name="Lane L."/>
            <person name="Bairoch A."/>
            <person name="Van Dorsselaer A."/>
            <person name="Carapito C."/>
        </authorList>
    </citation>
    <scope>IDENTIFICATION BY MASS SPECTROMETRY [LARGE SCALE ANALYSIS]</scope>
</reference>
<reference key="20">
    <citation type="journal article" date="2018" name="Acta Naturae">
        <title>Tag7-Mts1 Complex Induces Lymphocytes Migration via CCR5 and CXCR3 Receptors.</title>
        <authorList>
            <person name="Sharapova T.N."/>
            <person name="Romanova E.A."/>
            <person name="Sashchenko L.P."/>
            <person name="Yashin D.V."/>
        </authorList>
    </citation>
    <scope>FUNCTION</scope>
    <scope>INTERACTION WITH PGLYRP1 AND CCR5</scope>
    <scope>SUBCELLULAR LOCATION</scope>
</reference>
<reference key="21">
    <citation type="journal article" date="2002" name="Biochemistry">
        <title>Solution structure of human Mts1 (S100A4) as determined by NMR spectroscopy.</title>
        <authorList>
            <person name="Vallely K.M."/>
            <person name="Rustandi R.R."/>
            <person name="Ellis K.C."/>
            <person name="Varlamova O."/>
            <person name="Bresnick A.R."/>
            <person name="Weber D.J."/>
        </authorList>
    </citation>
    <scope>STRUCTURE BY NMR</scope>
</reference>
<reference evidence="13" key="22">
    <citation type="journal article" date="2017" name="Structure">
        <title>Regulation of the Equilibrium between Closed and Open Conformations of Annexin A2 by N-Terminal Phosphorylation and S100A4-Binding.</title>
        <authorList>
            <person name="Ecsedi P."/>
            <person name="Kiss B."/>
            <person name="Gogl G."/>
            <person name="Radnai L."/>
            <person name="Buday L."/>
            <person name="Koprivanacz K."/>
            <person name="Liliom K."/>
            <person name="Leveles I."/>
            <person name="Vertessy B."/>
            <person name="Jeszenoi N."/>
            <person name="Hetenyi C."/>
            <person name="Schlosser G."/>
            <person name="Katona G."/>
            <person name="Nyitray L."/>
        </authorList>
    </citation>
    <scope>X-RAY CRYSTALLOGRAPHY (2.10 ANGSTROMS)</scope>
    <scope>INTERACTION WITH ANNEXIN 2/ANXA2</scope>
</reference>
<reference evidence="14" key="23">
    <citation type="journal article" date="2020" name="Structure">
        <title>Structure Determination of the Transactivation Domain of p53 in Complex with S100A4Using Annexin A2 as a Crystallization Chaperone.</title>
        <authorList>
            <person name="Ecsedi P."/>
            <person name="Gogl G."/>
            <person name="Hof H."/>
            <person name="Kiss B."/>
            <person name="Harmat V."/>
            <person name="Nyitray L."/>
        </authorList>
    </citation>
    <scope>X-RAY CRYSTALLOGRAPHY (3.10 ANGSTROMS) OF 1-93</scope>
    <scope>INTERACTION WITH TP53</scope>
</reference>
<evidence type="ECO:0000250" key="1">
    <source>
        <dbReference type="UniProtKB" id="P07091"/>
    </source>
</evidence>
<evidence type="ECO:0000250" key="2">
    <source>
        <dbReference type="UniProtKB" id="P35466"/>
    </source>
</evidence>
<evidence type="ECO:0000255" key="3">
    <source>
        <dbReference type="PROSITE-ProRule" id="PRU00448"/>
    </source>
</evidence>
<evidence type="ECO:0000269" key="4">
    <source>
    </source>
</evidence>
<evidence type="ECO:0000269" key="5">
    <source>
    </source>
</evidence>
<evidence type="ECO:0000269" key="6">
    <source>
    </source>
</evidence>
<evidence type="ECO:0000269" key="7">
    <source>
    </source>
</evidence>
<evidence type="ECO:0000269" key="8">
    <source>
    </source>
</evidence>
<evidence type="ECO:0000269" key="9">
    <source>
    </source>
</evidence>
<evidence type="ECO:0000269" key="10">
    <source>
    </source>
</evidence>
<evidence type="ECO:0000269" key="11">
    <source>
    </source>
</evidence>
<evidence type="ECO:0000305" key="12"/>
<evidence type="ECO:0007744" key="13">
    <source>
        <dbReference type="PDB" id="5LPU"/>
    </source>
</evidence>
<evidence type="ECO:0007744" key="14">
    <source>
        <dbReference type="PDB" id="6T58"/>
    </source>
</evidence>
<evidence type="ECO:0007744" key="15">
    <source>
    </source>
</evidence>
<evidence type="ECO:0007829" key="16">
    <source>
        <dbReference type="PDB" id="1M31"/>
    </source>
</evidence>
<evidence type="ECO:0007829" key="17">
    <source>
        <dbReference type="PDB" id="2MRD"/>
    </source>
</evidence>
<evidence type="ECO:0007829" key="18">
    <source>
        <dbReference type="PDB" id="3C1V"/>
    </source>
</evidence>
<evidence type="ECO:0007829" key="19">
    <source>
        <dbReference type="PDB" id="4CFQ"/>
    </source>
</evidence>
<evidence type="ECO:0007829" key="20">
    <source>
        <dbReference type="PDB" id="6T58"/>
    </source>
</evidence>
<evidence type="ECO:0007829" key="21">
    <source>
        <dbReference type="PDB" id="7PSQ"/>
    </source>
</evidence>
<organism>
    <name type="scientific">Homo sapiens</name>
    <name type="common">Human</name>
    <dbReference type="NCBI Taxonomy" id="9606"/>
    <lineage>
        <taxon>Eukaryota</taxon>
        <taxon>Metazoa</taxon>
        <taxon>Chordata</taxon>
        <taxon>Craniata</taxon>
        <taxon>Vertebrata</taxon>
        <taxon>Euteleostomi</taxon>
        <taxon>Mammalia</taxon>
        <taxon>Eutheria</taxon>
        <taxon>Euarchontoglires</taxon>
        <taxon>Primates</taxon>
        <taxon>Haplorrhini</taxon>
        <taxon>Catarrhini</taxon>
        <taxon>Hominidae</taxon>
        <taxon>Homo</taxon>
    </lineage>
</organism>
<accession>P26447</accession>
<accession>A8K7R8</accession>
<accession>D3DV46</accession>
<accession>Q6ICP8</accession>
<name>S10A4_HUMAN</name>
<feature type="initiator methionine" description="Removed" evidence="2">
    <location>
        <position position="1"/>
    </location>
</feature>
<feature type="chain" id="PRO_0000143977" description="Protein S100-A4">
    <location>
        <begin position="2"/>
        <end position="101"/>
    </location>
</feature>
<feature type="domain" description="EF-hand 1" evidence="12">
    <location>
        <begin position="12"/>
        <end position="47"/>
    </location>
</feature>
<feature type="domain" description="EF-hand 2" evidence="3">
    <location>
        <begin position="50"/>
        <end position="85"/>
    </location>
</feature>
<feature type="binding site" evidence="12">
    <location>
        <position position="28"/>
    </location>
    <ligand>
        <name>Ca(2+)</name>
        <dbReference type="ChEBI" id="CHEBI:29108"/>
        <label>1</label>
        <note>low affinity</note>
    </ligand>
</feature>
<feature type="binding site" evidence="12">
    <location>
        <position position="33"/>
    </location>
    <ligand>
        <name>Ca(2+)</name>
        <dbReference type="ChEBI" id="CHEBI:29108"/>
        <label>1</label>
        <note>low affinity</note>
    </ligand>
</feature>
<feature type="binding site" evidence="3">
    <location>
        <position position="63"/>
    </location>
    <ligand>
        <name>Ca(2+)</name>
        <dbReference type="ChEBI" id="CHEBI:29108"/>
        <label>2</label>
        <note>high affinity</note>
    </ligand>
</feature>
<feature type="binding site" evidence="3">
    <location>
        <position position="65"/>
    </location>
    <ligand>
        <name>Ca(2+)</name>
        <dbReference type="ChEBI" id="CHEBI:29108"/>
        <label>2</label>
        <note>high affinity</note>
    </ligand>
</feature>
<feature type="binding site" evidence="3">
    <location>
        <position position="67"/>
    </location>
    <ligand>
        <name>Ca(2+)</name>
        <dbReference type="ChEBI" id="CHEBI:29108"/>
        <label>2</label>
        <note>high affinity</note>
    </ligand>
</feature>
<feature type="binding site" evidence="3">
    <location>
        <position position="69"/>
    </location>
    <ligand>
        <name>Ca(2+)</name>
        <dbReference type="ChEBI" id="CHEBI:29108"/>
        <label>2</label>
        <note>high affinity</note>
    </ligand>
</feature>
<feature type="binding site" evidence="3">
    <location>
        <position position="74"/>
    </location>
    <ligand>
        <name>Ca(2+)</name>
        <dbReference type="ChEBI" id="CHEBI:29108"/>
        <label>2</label>
        <note>high affinity</note>
    </ligand>
</feature>
<feature type="modified residue" description="N-acetylalanine" evidence="2">
    <location>
        <position position="2"/>
    </location>
</feature>
<feature type="modified residue" description="N6-acetyllysine" evidence="15">
    <location>
        <position position="7"/>
    </location>
</feature>
<feature type="modified residue" description="N6-acetyllysine" evidence="15">
    <location>
        <position position="35"/>
    </location>
</feature>
<feature type="helix" evidence="19">
    <location>
        <begin position="4"/>
        <end position="20"/>
    </location>
</feature>
<feature type="strand" evidence="19">
    <location>
        <begin position="22"/>
        <end position="25"/>
    </location>
</feature>
<feature type="strand" evidence="17">
    <location>
        <begin position="26"/>
        <end position="30"/>
    </location>
</feature>
<feature type="helix" evidence="19">
    <location>
        <begin position="31"/>
        <end position="41"/>
    </location>
</feature>
<feature type="helix" evidence="19">
    <location>
        <begin position="43"/>
        <end position="45"/>
    </location>
</feature>
<feature type="strand" evidence="20">
    <location>
        <begin position="47"/>
        <end position="49"/>
    </location>
</feature>
<feature type="helix" evidence="19">
    <location>
        <begin position="52"/>
        <end position="62"/>
    </location>
</feature>
<feature type="strand" evidence="16">
    <location>
        <begin position="64"/>
        <end position="66"/>
    </location>
</feature>
<feature type="strand" evidence="19">
    <location>
        <begin position="67"/>
        <end position="71"/>
    </location>
</feature>
<feature type="helix" evidence="19">
    <location>
        <begin position="72"/>
        <end position="86"/>
    </location>
</feature>
<feature type="turn" evidence="18">
    <location>
        <begin position="89"/>
        <end position="91"/>
    </location>
</feature>
<feature type="helix" evidence="21">
    <location>
        <begin position="93"/>
        <end position="95"/>
    </location>
</feature>
<sequence>MACPLEKALDVMVSTFHKYSGKEGDKFKLNKSELKELLTRELPSFLGKRTDEAAFQKLMSNLDSNRDNEVDFQEYCVFLSCIAMMCNEFFEGFPDKQPRKK</sequence>
<proteinExistence type="evidence at protein level"/>
<comment type="function">
    <text evidence="1 5 7 8 10">Calcium-binding protein that plays a role in various cellular processes including motility, angiogenesis, cell differentiation, apoptosis, and autophagy (PubMed:16707441, PubMed:23752197, PubMed:30713770). Increases cell motility and invasiveness by interacting with non-muscle myosin heavy chain (NMMHC) IIA/MYH9 (PubMed:16707441). Mechanistically, promotes filament depolymerization and increases the amount of soluble myosin-IIA, resulting in the formation of stable protrusions facilitating chemotaxis (By similarity). Also modulates the pro-apoptotic function of TP53 by binding to its C-terminal transactivation domain within the nucleus and reducing its protein levels (PubMed:23752197). Within the extracellular space, stimulates cytokine production including granulocyte colony-stimulating factor and CCL24 from T-lymphocytes (By similarity). In addition, stimulates T-lymphocyte chemotaxis by acting as a chemoattractant complex with PGLYRP1 that promotes lymphocyte migration via CCR5 and CXCR3 receptors (PubMed:26654597, PubMed:30713770).</text>
</comment>
<comment type="subunit">
    <text evidence="4 5 6 7 8 9 10 11">Homodimer. Interacts with PPFIBP1 in a calcium-dependent mode (PubMed:11836260). Interacts with PGLYRP1; this complex acts as a chemoattractant that promotes lymphocyte movement (PubMed:26654597, PubMed:30713770). Interacts with MYH9; this interaction increases cell motility (PubMed:16707441). Interacts with Annexin 2/ANXA2 (PubMed:28669632). Interacts with TP53; this interaction promotes TP53 degradation (PubMed:23752197, PubMed:32442400). Interacts with CCR5 (PubMed:30713770). Interacts with FCGR3A; this interaction inhibits PKC-dependent phosphorylation of FCGR3A.</text>
</comment>
<comment type="interaction">
    <interactant intactId="EBI-717058">
        <id>P26447</id>
    </interactant>
    <interactant intactId="EBI-953674">
        <id>P15514</id>
        <label>AREG</label>
    </interactant>
    <organismsDiffer>false</organismsDiffer>
    <experiments>5</experiments>
</comment>
<comment type="interaction">
    <interactant intactId="EBI-717058">
        <id>P26447</id>
    </interactant>
    <interactant intactId="EBI-6590057">
        <id>P35070</id>
        <label>BTC</label>
    </interactant>
    <organismsDiffer>false</organismsDiffer>
    <experiments>2</experiments>
</comment>
<comment type="interaction">
    <interactant intactId="EBI-717058">
        <id>P26447</id>
    </interactant>
    <interactant intactId="EBI-1047302">
        <id>Q9HB71</id>
        <label>CACYBP</label>
    </interactant>
    <organismsDiffer>false</organismsDiffer>
    <experiments>2</experiments>
</comment>
<comment type="interaction">
    <interactant intactId="EBI-717058">
        <id>P26447</id>
    </interactant>
    <interactant intactId="EBI-297353">
        <id>P00533</id>
        <label>EGFR</label>
    </interactant>
    <organismsDiffer>false</organismsDiffer>
    <experiments>6</experiments>
</comment>
<comment type="interaction">
    <interactant intactId="EBI-717058">
        <id>P26447</id>
    </interactant>
    <interactant intactId="EBI-720706">
        <id>P21860</id>
        <label>ERBB3</label>
    </interactant>
    <organismsDiffer>false</organismsDiffer>
    <experiments>4</experiments>
</comment>
<comment type="interaction">
    <interactant intactId="EBI-717058">
        <id>P26447</id>
    </interactant>
    <interactant intactId="EBI-80371">
        <id>Q15303</id>
        <label>ERBB4</label>
    </interactant>
    <organismsDiffer>false</organismsDiffer>
    <experiments>4</experiments>
</comment>
<comment type="interaction">
    <interactant intactId="EBI-717058">
        <id>P26447</id>
    </interactant>
    <interactant intactId="EBI-1056902">
        <id>P15311</id>
        <label>EZR</label>
    </interactant>
    <organismsDiffer>false</organismsDiffer>
    <experiments>3</experiments>
</comment>
<comment type="interaction">
    <interactant intactId="EBI-717058">
        <id>P26447</id>
    </interactant>
    <interactant intactId="EBI-389668">
        <id>Q00987</id>
        <label>MDM2</label>
    </interactant>
    <organismsDiffer>false</organismsDiffer>
    <experiments>3</experiments>
</comment>
<comment type="interaction">
    <interactant intactId="EBI-717058">
        <id>P26447</id>
    </interactant>
    <interactant intactId="EBI-350338">
        <id>P35579</id>
        <label>MYH9</label>
    </interactant>
    <organismsDiffer>false</organismsDiffer>
    <experiments>19</experiments>
</comment>
<comment type="interaction">
    <interactant intactId="EBI-717058">
        <id>P26447</id>
    </interactant>
    <interactant intactId="EBI-743686">
        <id>P23297</id>
        <label>S100A1</label>
    </interactant>
    <organismsDiffer>false</organismsDiffer>
    <experiments>4</experiments>
</comment>
<comment type="interaction">
    <interactant intactId="EBI-717058">
        <id>P26447</id>
    </interactant>
    <interactant intactId="EBI-717058">
        <id>P26447</id>
        <label>S100A4</label>
    </interactant>
    <organismsDiffer>false</organismsDiffer>
    <experiments>6</experiments>
</comment>
<comment type="interaction">
    <interactant intactId="EBI-717058">
        <id>P26447</id>
    </interactant>
    <interactant intactId="EBI-458391">
        <id>P04271</id>
        <label>S100B</label>
    </interactant>
    <organismsDiffer>false</organismsDiffer>
    <experiments>8</experiments>
</comment>
<comment type="interaction">
    <interactant intactId="EBI-717058">
        <id>P26447</id>
    </interactant>
    <interactant intactId="EBI-366083">
        <id>P04637</id>
        <label>TP53</label>
    </interactant>
    <organismsDiffer>false</organismsDiffer>
    <experiments>9</experiments>
</comment>
<comment type="interaction">
    <interactant intactId="EBI-717058">
        <id>P26447</id>
    </interactant>
    <interactant intactId="EBI-11723041">
        <id>Q8TD43</id>
        <label>TRPM4</label>
    </interactant>
    <organismsDiffer>false</organismsDiffer>
    <experiments>2</experiments>
</comment>
<comment type="subcellular location">
    <subcellularLocation>
        <location evidence="8 10">Secreted</location>
    </subcellularLocation>
    <subcellularLocation>
        <location evidence="7">Nucleus</location>
    </subcellularLocation>
    <subcellularLocation>
        <location evidence="1">Cytoplasm</location>
    </subcellularLocation>
</comment>
<comment type="tissue specificity">
    <text>Ubiquitously expressed.</text>
</comment>
<comment type="similarity">
    <text evidence="12">Belongs to the S-100 family.</text>
</comment>
<comment type="online information" name="Atlas of Genetics and Cytogenetics in Oncology and Haematology">
    <link uri="https://atlasgeneticsoncology.org/gene/42192/S100A4"/>
</comment>
<keyword id="KW-0002">3D-structure</keyword>
<keyword id="KW-0007">Acetylation</keyword>
<keyword id="KW-0106">Calcium</keyword>
<keyword id="KW-0963">Cytoplasm</keyword>
<keyword id="KW-0903">Direct protein sequencing</keyword>
<keyword id="KW-0479">Metal-binding</keyword>
<keyword id="KW-0539">Nucleus</keyword>
<keyword id="KW-1267">Proteomics identification</keyword>
<keyword id="KW-1185">Reference proteome</keyword>
<keyword id="KW-0677">Repeat</keyword>
<keyword id="KW-0964">Secreted</keyword>
<protein>
    <recommendedName>
        <fullName>Protein S100-A4</fullName>
    </recommendedName>
    <alternativeName>
        <fullName>Calvasculin</fullName>
    </alternativeName>
    <alternativeName>
        <fullName>Metastasin</fullName>
    </alternativeName>
    <alternativeName>
        <fullName>Placental calcium-binding protein</fullName>
    </alternativeName>
    <alternativeName>
        <fullName>Protein Mts1</fullName>
    </alternativeName>
    <alternativeName>
        <fullName>S100 calcium-binding protein A4</fullName>
    </alternativeName>
</protein>